<proteinExistence type="inferred from homology"/>
<protein>
    <recommendedName>
        <fullName evidence="2">Small ribosomal subunit protein uS9m</fullName>
    </recommendedName>
    <alternativeName>
        <fullName>37S ribosomal protein S9, mitochondrial</fullName>
    </alternativeName>
</protein>
<reference key="1">
    <citation type="journal article" date="2004" name="Science">
        <title>The Ashbya gossypii genome as a tool for mapping the ancient Saccharomyces cerevisiae genome.</title>
        <authorList>
            <person name="Dietrich F.S."/>
            <person name="Voegeli S."/>
            <person name="Brachat S."/>
            <person name="Lerch A."/>
            <person name="Gates K."/>
            <person name="Steiner S."/>
            <person name="Mohr C."/>
            <person name="Poehlmann R."/>
            <person name="Luedi P."/>
            <person name="Choi S."/>
            <person name="Wing R.A."/>
            <person name="Flavier A."/>
            <person name="Gaffney T.D."/>
            <person name="Philippsen P."/>
        </authorList>
    </citation>
    <scope>NUCLEOTIDE SEQUENCE [LARGE SCALE GENOMIC DNA]</scope>
    <source>
        <strain>ATCC 10895 / CBS 109.51 / FGSC 9923 / NRRL Y-1056</strain>
    </source>
</reference>
<reference key="2">
    <citation type="journal article" date="2013" name="G3 (Bethesda)">
        <title>Genomes of Ashbya fungi isolated from insects reveal four mating-type loci, numerous translocations, lack of transposons, and distinct gene duplications.</title>
        <authorList>
            <person name="Dietrich F.S."/>
            <person name="Voegeli S."/>
            <person name="Kuo S."/>
            <person name="Philippsen P."/>
        </authorList>
    </citation>
    <scope>GENOME REANNOTATION</scope>
    <source>
        <strain>ATCC 10895 / CBS 109.51 / FGSC 9923 / NRRL Y-1056</strain>
    </source>
</reference>
<gene>
    <name type="primary">MRPS9</name>
    <name type="ordered locus">AER033W</name>
</gene>
<dbReference type="EMBL" id="AE016818">
    <property type="protein sequence ID" value="AAS52717.1"/>
    <property type="molecule type" value="Genomic_DNA"/>
</dbReference>
<dbReference type="RefSeq" id="NP_984893.1">
    <property type="nucleotide sequence ID" value="NM_210247.1"/>
</dbReference>
<dbReference type="SMR" id="Q757I0"/>
<dbReference type="FunCoup" id="Q757I0">
    <property type="interactions" value="220"/>
</dbReference>
<dbReference type="STRING" id="284811.Q757I0"/>
<dbReference type="EnsemblFungi" id="AAS52717">
    <property type="protein sequence ID" value="AAS52717"/>
    <property type="gene ID" value="AGOS_AER033W"/>
</dbReference>
<dbReference type="GeneID" id="4621095"/>
<dbReference type="KEGG" id="ago:AGOS_AER033W"/>
<dbReference type="eggNOG" id="KOG1697">
    <property type="taxonomic scope" value="Eukaryota"/>
</dbReference>
<dbReference type="HOGENOM" id="CLU_036531_0_0_1"/>
<dbReference type="InParanoid" id="Q757I0"/>
<dbReference type="OMA" id="RESAMWA"/>
<dbReference type="OrthoDB" id="10254627at2759"/>
<dbReference type="Proteomes" id="UP000000591">
    <property type="component" value="Chromosome V"/>
</dbReference>
<dbReference type="GO" id="GO:0005763">
    <property type="term" value="C:mitochondrial small ribosomal subunit"/>
    <property type="evidence" value="ECO:0000318"/>
    <property type="project" value="GO_Central"/>
</dbReference>
<dbReference type="GO" id="GO:0003723">
    <property type="term" value="F:RNA binding"/>
    <property type="evidence" value="ECO:0000318"/>
    <property type="project" value="GO_Central"/>
</dbReference>
<dbReference type="GO" id="GO:0003735">
    <property type="term" value="F:structural constituent of ribosome"/>
    <property type="evidence" value="ECO:0000318"/>
    <property type="project" value="GO_Central"/>
</dbReference>
<dbReference type="GO" id="GO:0006412">
    <property type="term" value="P:translation"/>
    <property type="evidence" value="ECO:0007669"/>
    <property type="project" value="InterPro"/>
</dbReference>
<dbReference type="FunFam" id="3.30.230.10:FF:000001">
    <property type="entry name" value="30S ribosomal protein S9"/>
    <property type="match status" value="1"/>
</dbReference>
<dbReference type="Gene3D" id="3.30.230.10">
    <property type="match status" value="1"/>
</dbReference>
<dbReference type="InterPro" id="IPR020568">
    <property type="entry name" value="Ribosomal_Su5_D2-typ_SF"/>
</dbReference>
<dbReference type="InterPro" id="IPR000754">
    <property type="entry name" value="Ribosomal_uS9"/>
</dbReference>
<dbReference type="InterPro" id="IPR023035">
    <property type="entry name" value="Ribosomal_uS9_bac/plastid"/>
</dbReference>
<dbReference type="InterPro" id="IPR020574">
    <property type="entry name" value="Ribosomal_uS9_CS"/>
</dbReference>
<dbReference type="InterPro" id="IPR014721">
    <property type="entry name" value="Ribsml_uS5_D2-typ_fold_subgr"/>
</dbReference>
<dbReference type="NCBIfam" id="NF001099">
    <property type="entry name" value="PRK00132.1"/>
    <property type="match status" value="1"/>
</dbReference>
<dbReference type="PANTHER" id="PTHR21569">
    <property type="entry name" value="RIBOSOMAL PROTEIN S9"/>
    <property type="match status" value="1"/>
</dbReference>
<dbReference type="PANTHER" id="PTHR21569:SF1">
    <property type="entry name" value="SMALL RIBOSOMAL SUBUNIT PROTEIN US9M"/>
    <property type="match status" value="1"/>
</dbReference>
<dbReference type="Pfam" id="PF00380">
    <property type="entry name" value="Ribosomal_S9"/>
    <property type="match status" value="1"/>
</dbReference>
<dbReference type="SUPFAM" id="SSF54211">
    <property type="entry name" value="Ribosomal protein S5 domain 2-like"/>
    <property type="match status" value="1"/>
</dbReference>
<dbReference type="PROSITE" id="PS00360">
    <property type="entry name" value="RIBOSOMAL_S9"/>
    <property type="match status" value="1"/>
</dbReference>
<name>RT09_EREGS</name>
<evidence type="ECO:0000255" key="1"/>
<evidence type="ECO:0000305" key="2"/>
<comment type="subcellular location">
    <subcellularLocation>
        <location evidence="2">Mitochondrion</location>
    </subcellularLocation>
</comment>
<comment type="similarity">
    <text evidence="2">Belongs to the universal ribosomal protein uS9 family.</text>
</comment>
<feature type="transit peptide" description="Mitochondrion" evidence="1">
    <location>
        <begin position="1"/>
        <end status="unknown"/>
    </location>
</feature>
<feature type="chain" id="PRO_0000030644" description="Small ribosomal subunit protein uS9m">
    <location>
        <begin status="unknown"/>
        <end position="279"/>
    </location>
</feature>
<organism>
    <name type="scientific">Eremothecium gossypii (strain ATCC 10895 / CBS 109.51 / FGSC 9923 / NRRL Y-1056)</name>
    <name type="common">Yeast</name>
    <name type="synonym">Ashbya gossypii</name>
    <dbReference type="NCBI Taxonomy" id="284811"/>
    <lineage>
        <taxon>Eukaryota</taxon>
        <taxon>Fungi</taxon>
        <taxon>Dikarya</taxon>
        <taxon>Ascomycota</taxon>
        <taxon>Saccharomycotina</taxon>
        <taxon>Saccharomycetes</taxon>
        <taxon>Saccharomycetales</taxon>
        <taxon>Saccharomycetaceae</taxon>
        <taxon>Eremothecium</taxon>
    </lineage>
</organism>
<keyword id="KW-0496">Mitochondrion</keyword>
<keyword id="KW-1185">Reference proteome</keyword>
<keyword id="KW-0687">Ribonucleoprotein</keyword>
<keyword id="KW-0689">Ribosomal protein</keyword>
<keyword id="KW-0809">Transit peptide</keyword>
<accession>Q757I0</accession>
<sequence>MFARMASLRALVPVRALLWRAPVRSVHRAAVRETRIVPQLPTFYSANPAHEAHMDRLEALLRKHTKQQARRVAVERTASDRPRWLSFDQYALIGGTSRLKPTQYRQLVSVLDRLHAIDPQLSNGEIAATLEAFLRKSRLEEQNVVRQELDHLGRACAVGRRKTSSAKVWLVRGSGEVLVNGRTFADYFSKIKDRDAIMYPLRVLDAAGKYNIFAAVRGGGVTGQAEAIMHAVAKALVVFNPLLKTRLHRAGVLTRDYRHVERKKPGKRKARKMPAWVKR</sequence>